<organism>
    <name type="scientific">Xylella fastidiosa (strain M23)</name>
    <dbReference type="NCBI Taxonomy" id="405441"/>
    <lineage>
        <taxon>Bacteria</taxon>
        <taxon>Pseudomonadati</taxon>
        <taxon>Pseudomonadota</taxon>
        <taxon>Gammaproteobacteria</taxon>
        <taxon>Lysobacterales</taxon>
        <taxon>Lysobacteraceae</taxon>
        <taxon>Xylella</taxon>
    </lineage>
</organism>
<sequence length="426" mass="47405">MLDPTLLRQQLAKLAECLLTVRGFTLDVAALEALESERKRIQVHTQELQSLRNSKSKAIGQARSKGEDVSALMAEVAAFSDDLKASEIALEEIRTELEKVALDIPNLPQQDVPLGADERDNVEQARWGVPRTFDFAIKDHVELGACHGWLDAESAAKLSGARFTVLRGPIARLHRALAQCMLDLHVSQHGYEEVNVPIIVNADSLHGTGQLPKFEEDMFSTQLGEHRRYLISTSEISLTNLVRNEIIEADRLPLRMVAHSLCFRSEAGSGGRDTRGMIRQHQFEKVELVSVCKPQDSEGEHHRMTRCAETVLEMLGLPYRKILLCTGDMGFAATKTYDLEVWLPSQGMYREISSCSNCGDFQARRMQARWRNSVTGKPELVHTLNGSGVAVGRAMIAVMENYQNADGSITVPEVLRPYMDGLSRIG</sequence>
<reference key="1">
    <citation type="journal article" date="2010" name="J. Bacteriol.">
        <title>Whole genome sequences of two Xylella fastidiosa strains (M12 and M23) causing almond leaf scorch disease in California.</title>
        <authorList>
            <person name="Chen J."/>
            <person name="Xie G."/>
            <person name="Han S."/>
            <person name="Chertkov O."/>
            <person name="Sims D."/>
            <person name="Civerolo E.L."/>
        </authorList>
    </citation>
    <scope>NUCLEOTIDE SEQUENCE [LARGE SCALE GENOMIC DNA]</scope>
    <source>
        <strain>M23</strain>
    </source>
</reference>
<accession>B2I631</accession>
<dbReference type="EC" id="6.1.1.11" evidence="1"/>
<dbReference type="EMBL" id="CP001011">
    <property type="protein sequence ID" value="ACB92820.1"/>
    <property type="molecule type" value="Genomic_DNA"/>
</dbReference>
<dbReference type="RefSeq" id="WP_004088264.1">
    <property type="nucleotide sequence ID" value="NC_010577.1"/>
</dbReference>
<dbReference type="SMR" id="B2I631"/>
<dbReference type="GeneID" id="93905132"/>
<dbReference type="KEGG" id="xfn:XfasM23_1402"/>
<dbReference type="HOGENOM" id="CLU_023797_1_1_6"/>
<dbReference type="UniPathway" id="UPA00906">
    <property type="reaction ID" value="UER00895"/>
</dbReference>
<dbReference type="Proteomes" id="UP000001698">
    <property type="component" value="Chromosome"/>
</dbReference>
<dbReference type="GO" id="GO:0005737">
    <property type="term" value="C:cytoplasm"/>
    <property type="evidence" value="ECO:0007669"/>
    <property type="project" value="UniProtKB-SubCell"/>
</dbReference>
<dbReference type="GO" id="GO:0005524">
    <property type="term" value="F:ATP binding"/>
    <property type="evidence" value="ECO:0007669"/>
    <property type="project" value="UniProtKB-UniRule"/>
</dbReference>
<dbReference type="GO" id="GO:0004828">
    <property type="term" value="F:serine-tRNA ligase activity"/>
    <property type="evidence" value="ECO:0007669"/>
    <property type="project" value="UniProtKB-UniRule"/>
</dbReference>
<dbReference type="GO" id="GO:0016260">
    <property type="term" value="P:selenocysteine biosynthetic process"/>
    <property type="evidence" value="ECO:0007669"/>
    <property type="project" value="UniProtKB-UniRule"/>
</dbReference>
<dbReference type="GO" id="GO:0006434">
    <property type="term" value="P:seryl-tRNA aminoacylation"/>
    <property type="evidence" value="ECO:0007669"/>
    <property type="project" value="UniProtKB-UniRule"/>
</dbReference>
<dbReference type="CDD" id="cd00770">
    <property type="entry name" value="SerRS_core"/>
    <property type="match status" value="1"/>
</dbReference>
<dbReference type="Gene3D" id="3.30.930.10">
    <property type="entry name" value="Bira Bifunctional Protein, Domain 2"/>
    <property type="match status" value="1"/>
</dbReference>
<dbReference type="Gene3D" id="1.10.287.40">
    <property type="entry name" value="Serine-tRNA synthetase, tRNA binding domain"/>
    <property type="match status" value="1"/>
</dbReference>
<dbReference type="HAMAP" id="MF_00176">
    <property type="entry name" value="Ser_tRNA_synth_type1"/>
    <property type="match status" value="1"/>
</dbReference>
<dbReference type="InterPro" id="IPR002314">
    <property type="entry name" value="aa-tRNA-synt_IIb"/>
</dbReference>
<dbReference type="InterPro" id="IPR006195">
    <property type="entry name" value="aa-tRNA-synth_II"/>
</dbReference>
<dbReference type="InterPro" id="IPR045864">
    <property type="entry name" value="aa-tRNA-synth_II/BPL/LPL"/>
</dbReference>
<dbReference type="InterPro" id="IPR002317">
    <property type="entry name" value="Ser-tRNA-ligase_type_1"/>
</dbReference>
<dbReference type="InterPro" id="IPR015866">
    <property type="entry name" value="Ser-tRNA-synth_1_N"/>
</dbReference>
<dbReference type="InterPro" id="IPR042103">
    <property type="entry name" value="SerRS_1_N_sf"/>
</dbReference>
<dbReference type="InterPro" id="IPR033729">
    <property type="entry name" value="SerRS_core"/>
</dbReference>
<dbReference type="InterPro" id="IPR010978">
    <property type="entry name" value="tRNA-bd_arm"/>
</dbReference>
<dbReference type="NCBIfam" id="TIGR00414">
    <property type="entry name" value="serS"/>
    <property type="match status" value="1"/>
</dbReference>
<dbReference type="PANTHER" id="PTHR43697:SF1">
    <property type="entry name" value="SERINE--TRNA LIGASE"/>
    <property type="match status" value="1"/>
</dbReference>
<dbReference type="PANTHER" id="PTHR43697">
    <property type="entry name" value="SERYL-TRNA SYNTHETASE"/>
    <property type="match status" value="1"/>
</dbReference>
<dbReference type="Pfam" id="PF02403">
    <property type="entry name" value="Seryl_tRNA_N"/>
    <property type="match status" value="1"/>
</dbReference>
<dbReference type="Pfam" id="PF00587">
    <property type="entry name" value="tRNA-synt_2b"/>
    <property type="match status" value="1"/>
</dbReference>
<dbReference type="PIRSF" id="PIRSF001529">
    <property type="entry name" value="Ser-tRNA-synth_IIa"/>
    <property type="match status" value="1"/>
</dbReference>
<dbReference type="PRINTS" id="PR00981">
    <property type="entry name" value="TRNASYNTHSER"/>
</dbReference>
<dbReference type="SUPFAM" id="SSF55681">
    <property type="entry name" value="Class II aaRS and biotin synthetases"/>
    <property type="match status" value="1"/>
</dbReference>
<dbReference type="SUPFAM" id="SSF46589">
    <property type="entry name" value="tRNA-binding arm"/>
    <property type="match status" value="1"/>
</dbReference>
<dbReference type="PROSITE" id="PS50862">
    <property type="entry name" value="AA_TRNA_LIGASE_II"/>
    <property type="match status" value="1"/>
</dbReference>
<comment type="function">
    <text evidence="1">Catalyzes the attachment of serine to tRNA(Ser). Is also able to aminoacylate tRNA(Sec) with serine, to form the misacylated tRNA L-seryl-tRNA(Sec), which will be further converted into selenocysteinyl-tRNA(Sec).</text>
</comment>
<comment type="catalytic activity">
    <reaction evidence="1">
        <text>tRNA(Ser) + L-serine + ATP = L-seryl-tRNA(Ser) + AMP + diphosphate + H(+)</text>
        <dbReference type="Rhea" id="RHEA:12292"/>
        <dbReference type="Rhea" id="RHEA-COMP:9669"/>
        <dbReference type="Rhea" id="RHEA-COMP:9703"/>
        <dbReference type="ChEBI" id="CHEBI:15378"/>
        <dbReference type="ChEBI" id="CHEBI:30616"/>
        <dbReference type="ChEBI" id="CHEBI:33019"/>
        <dbReference type="ChEBI" id="CHEBI:33384"/>
        <dbReference type="ChEBI" id="CHEBI:78442"/>
        <dbReference type="ChEBI" id="CHEBI:78533"/>
        <dbReference type="ChEBI" id="CHEBI:456215"/>
        <dbReference type="EC" id="6.1.1.11"/>
    </reaction>
</comment>
<comment type="catalytic activity">
    <reaction evidence="1">
        <text>tRNA(Sec) + L-serine + ATP = L-seryl-tRNA(Sec) + AMP + diphosphate + H(+)</text>
        <dbReference type="Rhea" id="RHEA:42580"/>
        <dbReference type="Rhea" id="RHEA-COMP:9742"/>
        <dbReference type="Rhea" id="RHEA-COMP:10128"/>
        <dbReference type="ChEBI" id="CHEBI:15378"/>
        <dbReference type="ChEBI" id="CHEBI:30616"/>
        <dbReference type="ChEBI" id="CHEBI:33019"/>
        <dbReference type="ChEBI" id="CHEBI:33384"/>
        <dbReference type="ChEBI" id="CHEBI:78442"/>
        <dbReference type="ChEBI" id="CHEBI:78533"/>
        <dbReference type="ChEBI" id="CHEBI:456215"/>
        <dbReference type="EC" id="6.1.1.11"/>
    </reaction>
</comment>
<comment type="pathway">
    <text evidence="1">Aminoacyl-tRNA biosynthesis; selenocysteinyl-tRNA(Sec) biosynthesis; L-seryl-tRNA(Sec) from L-serine and tRNA(Sec): step 1/1.</text>
</comment>
<comment type="subunit">
    <text evidence="1">Homodimer. The tRNA molecule binds across the dimer.</text>
</comment>
<comment type="subcellular location">
    <subcellularLocation>
        <location evidence="1">Cytoplasm</location>
    </subcellularLocation>
</comment>
<comment type="domain">
    <text evidence="1">Consists of two distinct domains, a catalytic core and a N-terminal extension that is involved in tRNA binding.</text>
</comment>
<comment type="similarity">
    <text evidence="1">Belongs to the class-II aminoacyl-tRNA synthetase family. Type-1 seryl-tRNA synthetase subfamily.</text>
</comment>
<name>SYS_XYLF2</name>
<evidence type="ECO:0000255" key="1">
    <source>
        <dbReference type="HAMAP-Rule" id="MF_00176"/>
    </source>
</evidence>
<proteinExistence type="inferred from homology"/>
<protein>
    <recommendedName>
        <fullName evidence="1">Serine--tRNA ligase</fullName>
        <ecNumber evidence="1">6.1.1.11</ecNumber>
    </recommendedName>
    <alternativeName>
        <fullName evidence="1">Seryl-tRNA synthetase</fullName>
        <shortName evidence="1">SerRS</shortName>
    </alternativeName>
    <alternativeName>
        <fullName evidence="1">Seryl-tRNA(Ser/Sec) synthetase</fullName>
    </alternativeName>
</protein>
<gene>
    <name evidence="1" type="primary">serS</name>
    <name type="ordered locus">XfasM23_1402</name>
</gene>
<keyword id="KW-0030">Aminoacyl-tRNA synthetase</keyword>
<keyword id="KW-0067">ATP-binding</keyword>
<keyword id="KW-0963">Cytoplasm</keyword>
<keyword id="KW-0436">Ligase</keyword>
<keyword id="KW-0547">Nucleotide-binding</keyword>
<keyword id="KW-0648">Protein biosynthesis</keyword>
<feature type="chain" id="PRO_1000098148" description="Serine--tRNA ligase">
    <location>
        <begin position="1"/>
        <end position="426"/>
    </location>
</feature>
<feature type="binding site" evidence="1">
    <location>
        <begin position="233"/>
        <end position="235"/>
    </location>
    <ligand>
        <name>L-serine</name>
        <dbReference type="ChEBI" id="CHEBI:33384"/>
    </ligand>
</feature>
<feature type="binding site" evidence="1">
    <location>
        <begin position="264"/>
        <end position="266"/>
    </location>
    <ligand>
        <name>ATP</name>
        <dbReference type="ChEBI" id="CHEBI:30616"/>
    </ligand>
</feature>
<feature type="binding site" evidence="1">
    <location>
        <position position="287"/>
    </location>
    <ligand>
        <name>L-serine</name>
        <dbReference type="ChEBI" id="CHEBI:33384"/>
    </ligand>
</feature>
<feature type="binding site" evidence="1">
    <location>
        <begin position="351"/>
        <end position="354"/>
    </location>
    <ligand>
        <name>ATP</name>
        <dbReference type="ChEBI" id="CHEBI:30616"/>
    </ligand>
</feature>
<feature type="binding site" evidence="1">
    <location>
        <position position="387"/>
    </location>
    <ligand>
        <name>L-serine</name>
        <dbReference type="ChEBI" id="CHEBI:33384"/>
    </ligand>
</feature>